<protein>
    <recommendedName>
        <fullName evidence="7">tRNA (guanine(10)-N(2))-methyltransferase TRMT11</fullName>
        <ecNumber evidence="4">2.1.1.214</ecNumber>
    </recommendedName>
    <alternativeName>
        <fullName evidence="9">tRNA methyltransferase 11 homolog</fullName>
    </alternativeName>
</protein>
<organism>
    <name type="scientific">Homo sapiens</name>
    <name type="common">Human</name>
    <dbReference type="NCBI Taxonomy" id="9606"/>
    <lineage>
        <taxon>Eukaryota</taxon>
        <taxon>Metazoa</taxon>
        <taxon>Chordata</taxon>
        <taxon>Craniata</taxon>
        <taxon>Vertebrata</taxon>
        <taxon>Euteleostomi</taxon>
        <taxon>Mammalia</taxon>
        <taxon>Eutheria</taxon>
        <taxon>Euarchontoglires</taxon>
        <taxon>Primates</taxon>
        <taxon>Haplorrhini</taxon>
        <taxon>Catarrhini</taxon>
        <taxon>Hominidae</taxon>
        <taxon>Homo</taxon>
    </lineage>
</organism>
<dbReference type="EC" id="2.1.1.214" evidence="4"/>
<dbReference type="EMBL" id="AF532977">
    <property type="protein sequence ID" value="AAQ10284.1"/>
    <property type="molecule type" value="mRNA"/>
</dbReference>
<dbReference type="EMBL" id="AF182423">
    <property type="protein sequence ID" value="AAG14959.1"/>
    <property type="molecule type" value="mRNA"/>
</dbReference>
<dbReference type="EMBL" id="AL035689">
    <property type="status" value="NOT_ANNOTATED_CDS"/>
    <property type="molecule type" value="Genomic_DNA"/>
</dbReference>
<dbReference type="EMBL" id="CH471051">
    <property type="protein sequence ID" value="EAW48125.1"/>
    <property type="molecule type" value="Genomic_DNA"/>
</dbReference>
<dbReference type="EMBL" id="CH471051">
    <property type="protein sequence ID" value="EAW48126.1"/>
    <property type="molecule type" value="Genomic_DNA"/>
</dbReference>
<dbReference type="EMBL" id="BC056878">
    <property type="protein sequence ID" value="AAH56878.1"/>
    <property type="molecule type" value="mRNA"/>
</dbReference>
<dbReference type="CCDS" id="CCDS35496.1">
    <molecule id="Q7Z4G4-1"/>
</dbReference>
<dbReference type="RefSeq" id="NP_001026882.2">
    <molecule id="Q7Z4G4-1"/>
    <property type="nucleotide sequence ID" value="NM_001031712.3"/>
</dbReference>
<dbReference type="SMR" id="Q7Z4G4"/>
<dbReference type="BioGRID" id="121918">
    <property type="interactions" value="44"/>
</dbReference>
<dbReference type="ComplexPortal" id="CPX-2848">
    <property type="entry name" value="TRMT11-TRM112 methyltransferase complex"/>
</dbReference>
<dbReference type="FunCoup" id="Q7Z4G4">
    <property type="interactions" value="1203"/>
</dbReference>
<dbReference type="IntAct" id="Q7Z4G4">
    <property type="interactions" value="19"/>
</dbReference>
<dbReference type="STRING" id="9606.ENSP00000333934"/>
<dbReference type="iPTMnet" id="Q7Z4G4"/>
<dbReference type="PhosphoSitePlus" id="Q7Z4G4"/>
<dbReference type="BioMuta" id="TRMT11"/>
<dbReference type="DMDM" id="74723330"/>
<dbReference type="jPOST" id="Q7Z4G4"/>
<dbReference type="MassIVE" id="Q7Z4G4"/>
<dbReference type="PaxDb" id="9606-ENSP00000333934"/>
<dbReference type="PeptideAtlas" id="Q7Z4G4"/>
<dbReference type="ProteomicsDB" id="69176">
    <molecule id="Q7Z4G4-1"/>
</dbReference>
<dbReference type="ProteomicsDB" id="69177">
    <molecule id="Q7Z4G4-2"/>
</dbReference>
<dbReference type="ProteomicsDB" id="69178">
    <molecule id="Q7Z4G4-3"/>
</dbReference>
<dbReference type="Pumba" id="Q7Z4G4"/>
<dbReference type="Antibodypedia" id="32733">
    <property type="antibodies" value="118 antibodies from 25 providers"/>
</dbReference>
<dbReference type="DNASU" id="60487"/>
<dbReference type="Ensembl" id="ENST00000334379.11">
    <molecule id="Q7Z4G4-1"/>
    <property type="protein sequence ID" value="ENSP00000333934.5"/>
    <property type="gene ID" value="ENSG00000066651.20"/>
</dbReference>
<dbReference type="Ensembl" id="ENST00000368332.7">
    <molecule id="Q7Z4G4-2"/>
    <property type="protein sequence ID" value="ENSP00000357316.3"/>
    <property type="gene ID" value="ENSG00000066651.20"/>
</dbReference>
<dbReference type="Ensembl" id="ENST00000479748.5">
    <molecule id="Q7Z4G4-3"/>
    <property type="protein sequence ID" value="ENSP00000433724.1"/>
    <property type="gene ID" value="ENSG00000066651.20"/>
</dbReference>
<dbReference type="GeneID" id="60487"/>
<dbReference type="KEGG" id="hsa:60487"/>
<dbReference type="MANE-Select" id="ENST00000334379.11">
    <property type="protein sequence ID" value="ENSP00000333934.5"/>
    <property type="RefSeq nucleotide sequence ID" value="NM_001031712.3"/>
    <property type="RefSeq protein sequence ID" value="NP_001026882.2"/>
</dbReference>
<dbReference type="UCSC" id="uc003qam.4">
    <molecule id="Q7Z4G4-1"/>
    <property type="organism name" value="human"/>
</dbReference>
<dbReference type="AGR" id="HGNC:21080"/>
<dbReference type="CTD" id="60487"/>
<dbReference type="DisGeNET" id="60487"/>
<dbReference type="GeneCards" id="TRMT11"/>
<dbReference type="HGNC" id="HGNC:21080">
    <property type="gene designation" value="TRMT11"/>
</dbReference>
<dbReference type="HPA" id="ENSG00000066651">
    <property type="expression patterns" value="Low tissue specificity"/>
</dbReference>
<dbReference type="neXtProt" id="NX_Q7Z4G4"/>
<dbReference type="OpenTargets" id="ENSG00000066651"/>
<dbReference type="PharmGKB" id="PA162407032"/>
<dbReference type="VEuPathDB" id="HostDB:ENSG00000066651"/>
<dbReference type="eggNOG" id="KOG2671">
    <property type="taxonomic scope" value="Eukaryota"/>
</dbReference>
<dbReference type="GeneTree" id="ENSGT00390000018131"/>
<dbReference type="HOGENOM" id="CLU_029646_1_1_1"/>
<dbReference type="InParanoid" id="Q7Z4G4"/>
<dbReference type="OMA" id="SCNLNRY"/>
<dbReference type="OrthoDB" id="296065at2759"/>
<dbReference type="PAN-GO" id="Q7Z4G4">
    <property type="GO annotations" value="2 GO annotations based on evolutionary models"/>
</dbReference>
<dbReference type="PhylomeDB" id="Q7Z4G4"/>
<dbReference type="TreeFam" id="TF106161"/>
<dbReference type="PathwayCommons" id="Q7Z4G4"/>
<dbReference type="Reactome" id="R-HSA-6782315">
    <property type="pathway name" value="tRNA modification in the nucleus and cytosol"/>
</dbReference>
<dbReference type="SignaLink" id="Q7Z4G4"/>
<dbReference type="BioGRID-ORCS" id="60487">
    <property type="hits" value="61 hits in 1161 CRISPR screens"/>
</dbReference>
<dbReference type="ChiTaRS" id="TRMT11">
    <property type="organism name" value="human"/>
</dbReference>
<dbReference type="GenomeRNAi" id="60487"/>
<dbReference type="Pharos" id="Q7Z4G4">
    <property type="development level" value="Tbio"/>
</dbReference>
<dbReference type="PRO" id="PR:Q7Z4G4"/>
<dbReference type="Proteomes" id="UP000005640">
    <property type="component" value="Chromosome 6"/>
</dbReference>
<dbReference type="RNAct" id="Q7Z4G4">
    <property type="molecule type" value="protein"/>
</dbReference>
<dbReference type="Bgee" id="ENSG00000066651">
    <property type="expression patterns" value="Expressed in secondary oocyte and 198 other cell types or tissues"/>
</dbReference>
<dbReference type="ExpressionAtlas" id="Q7Z4G4">
    <property type="expression patterns" value="baseline and differential"/>
</dbReference>
<dbReference type="GO" id="GO:0005737">
    <property type="term" value="C:cytoplasm"/>
    <property type="evidence" value="ECO:0000314"/>
    <property type="project" value="UniProtKB"/>
</dbReference>
<dbReference type="GO" id="GO:0005739">
    <property type="term" value="C:mitochondrion"/>
    <property type="evidence" value="ECO:0006056"/>
    <property type="project" value="FlyBase"/>
</dbReference>
<dbReference type="GO" id="GO:0043528">
    <property type="term" value="C:tRNA (m2G10) methyltransferase complex"/>
    <property type="evidence" value="ECO:0000314"/>
    <property type="project" value="UniProtKB"/>
</dbReference>
<dbReference type="GO" id="GO:0008168">
    <property type="term" value="F:methyltransferase activity"/>
    <property type="evidence" value="ECO:0000318"/>
    <property type="project" value="GO_Central"/>
</dbReference>
<dbReference type="GO" id="GO:0160102">
    <property type="term" value="F:tRNA (guanine(10)-N2)-methyltransferase activity"/>
    <property type="evidence" value="ECO:0000314"/>
    <property type="project" value="UniProtKB"/>
</dbReference>
<dbReference type="GO" id="GO:0000049">
    <property type="term" value="F:tRNA binding"/>
    <property type="evidence" value="ECO:0007669"/>
    <property type="project" value="UniProtKB-KW"/>
</dbReference>
<dbReference type="GO" id="GO:0032259">
    <property type="term" value="P:methylation"/>
    <property type="evidence" value="ECO:0007669"/>
    <property type="project" value="UniProtKB-KW"/>
</dbReference>
<dbReference type="GO" id="GO:0008033">
    <property type="term" value="P:tRNA processing"/>
    <property type="evidence" value="ECO:0007669"/>
    <property type="project" value="UniProtKB-KW"/>
</dbReference>
<dbReference type="CDD" id="cd02440">
    <property type="entry name" value="AdoMet_MTases"/>
    <property type="match status" value="1"/>
</dbReference>
<dbReference type="FunFam" id="3.40.50.150:FF:000069">
    <property type="entry name" value="tRNA (Guanine(10)-N2)-methyltransferase homolog isoform X2"/>
    <property type="match status" value="1"/>
</dbReference>
<dbReference type="Gene3D" id="3.40.50.150">
    <property type="entry name" value="Vaccinia Virus protein VP39"/>
    <property type="match status" value="1"/>
</dbReference>
<dbReference type="InterPro" id="IPR002052">
    <property type="entry name" value="DNA_methylase_N6_adenine_CS"/>
</dbReference>
<dbReference type="InterPro" id="IPR000241">
    <property type="entry name" value="RlmKL-like_Mtase"/>
</dbReference>
<dbReference type="InterPro" id="IPR029063">
    <property type="entry name" value="SAM-dependent_MTases_sf"/>
</dbReference>
<dbReference type="InterPro" id="IPR016691">
    <property type="entry name" value="tRNA_mtfrase_TRM11"/>
</dbReference>
<dbReference type="PANTHER" id="PTHR13370">
    <property type="entry name" value="RNA METHYLASE-RELATED"/>
    <property type="match status" value="1"/>
</dbReference>
<dbReference type="PANTHER" id="PTHR13370:SF3">
    <property type="entry name" value="TRNA (GUANINE(10)-N2)-METHYLTRANSFERASE HOMOLOG"/>
    <property type="match status" value="1"/>
</dbReference>
<dbReference type="Pfam" id="PF01170">
    <property type="entry name" value="UPF0020"/>
    <property type="match status" value="1"/>
</dbReference>
<dbReference type="PIRSF" id="PIRSF017259">
    <property type="entry name" value="tRNA_mtfrase_TRM11"/>
    <property type="match status" value="1"/>
</dbReference>
<dbReference type="PRINTS" id="PR00507">
    <property type="entry name" value="N12N6MTFRASE"/>
</dbReference>
<dbReference type="SUPFAM" id="SSF53335">
    <property type="entry name" value="S-adenosyl-L-methionine-dependent methyltransferases"/>
    <property type="match status" value="1"/>
</dbReference>
<dbReference type="PROSITE" id="PS00092">
    <property type="entry name" value="N6_MTASE"/>
    <property type="match status" value="1"/>
</dbReference>
<dbReference type="PROSITE" id="PS51627">
    <property type="entry name" value="SAM_MT_TRM11"/>
    <property type="match status" value="1"/>
</dbReference>
<feature type="initiator methionine" description="Removed" evidence="10 11">
    <location>
        <position position="1"/>
    </location>
</feature>
<feature type="chain" id="PRO_0000230288" description="tRNA (guanine(10)-N(2))-methyltransferase TRMT11">
    <location>
        <begin position="2"/>
        <end position="463"/>
    </location>
</feature>
<feature type="modified residue" description="N-acetylalanine" evidence="10 11">
    <location>
        <position position="2"/>
    </location>
</feature>
<feature type="splice variant" id="VSP_017816" description="In isoform 3." evidence="5">
    <original>GKAT</original>
    <variation>ACST</variation>
    <location>
        <begin position="254"/>
        <end position="257"/>
    </location>
</feature>
<feature type="splice variant" id="VSP_017817" description="In isoform 3." evidence="5">
    <location>
        <begin position="258"/>
        <end position="463"/>
    </location>
</feature>
<feature type="splice variant" id="VSP_017818" description="In isoform 2." evidence="6">
    <location>
        <begin position="416"/>
        <end position="420"/>
    </location>
</feature>
<feature type="sequence variant" id="VAR_025786" description="In dbSNP:rs17854915." evidence="2">
    <original>L</original>
    <variation>Q</variation>
    <location>
        <position position="230"/>
    </location>
</feature>
<evidence type="ECO:0000255" key="1">
    <source>
        <dbReference type="PROSITE-ProRule" id="PRU00959"/>
    </source>
</evidence>
<evidence type="ECO:0000269" key="2">
    <source>
    </source>
</evidence>
<evidence type="ECO:0000269" key="3">
    <source>
    </source>
</evidence>
<evidence type="ECO:0000269" key="4">
    <source>
    </source>
</evidence>
<evidence type="ECO:0000303" key="5">
    <source ref="2"/>
</evidence>
<evidence type="ECO:0000305" key="6"/>
<evidence type="ECO:0000305" key="7">
    <source>
    </source>
</evidence>
<evidence type="ECO:0000312" key="8">
    <source>
        <dbReference type="EMBL" id="AAG14959.1"/>
    </source>
</evidence>
<evidence type="ECO:0000312" key="9">
    <source>
        <dbReference type="HGNC" id="HGNC:21080"/>
    </source>
</evidence>
<evidence type="ECO:0007744" key="10">
    <source>
    </source>
</evidence>
<evidence type="ECO:0007744" key="11">
    <source>
    </source>
</evidence>
<gene>
    <name evidence="9" type="primary">TRMT11</name>
    <name evidence="9" type="synonym">C6orf75</name>
    <name evidence="8" type="ORF">MDS024</name>
</gene>
<sequence>MALSCTLNRYLLLMAQEHLEFRLPEIKSLLLLFGGQFASSQETYGKSPFWILSIPSEDIARNLMKRTVCAKSIFELWGHGQSPEELYSSLKNYPVEKMVPFLHSDSTYKIKIHTFNKTLTQEEKIKRIDALEFLPFEGKVNLKKPQHVFSVLEDYGLDPNCIPENPHNIYFGRWIADGQRELIESYSVKKRHFIGNTSMDAGLSFIMANHGKVKENDIVFDPFVGTGGLLIACAHFGAYVYGTDIDYNTVHGLGKATRKNQKWRGPDENIRANLRQYGLEKYYLDVLVSDASKPSWRKGTYFDAIITDPPYGIRESTRRTGSQKEIPKGIEKWEKCPESHVPVSLSYHLSDMFLDLLNFAAETLVLGGRLVYWLPVYTPEYTEEMVPWHPCLELVSNCEQKLSSHTSRRLITMEKVKKFENRDQYSHLLSDHFLPYQGHNSFREKYFSGVTKRIAKEEKSTQE</sequence>
<reference key="1">
    <citation type="submission" date="2002-07" db="EMBL/GenBank/DDBJ databases">
        <title>Molecular identification and conserved evolution of a novel RNA methylase protein gene in higher eukaryotic organisms.</title>
        <authorList>
            <person name="Chen Y."/>
            <person name="Huang C.-H."/>
        </authorList>
    </citation>
    <scope>NUCLEOTIDE SEQUENCE [MRNA] (ISOFORM 1)</scope>
</reference>
<reference key="2">
    <citation type="submission" date="1999-09" db="EMBL/GenBank/DDBJ databases">
        <title>Novel genes expressed in hematopoietic stem/progenitor cells from myelodysplastic syndrome patients.</title>
        <authorList>
            <person name="Huang C."/>
            <person name="Qian B."/>
            <person name="Tu Y."/>
            <person name="Gu W."/>
            <person name="Wang Y."/>
            <person name="Han Z."/>
            <person name="Chen Z."/>
        </authorList>
    </citation>
    <scope>NUCLEOTIDE SEQUENCE [LARGE SCALE MRNA] (ISOFORM 3)</scope>
    <source>
        <tissue>Hematopoietic stem cell</tissue>
    </source>
</reference>
<reference key="3">
    <citation type="journal article" date="2003" name="Nature">
        <title>The DNA sequence and analysis of human chromosome 6.</title>
        <authorList>
            <person name="Mungall A.J."/>
            <person name="Palmer S.A."/>
            <person name="Sims S.K."/>
            <person name="Edwards C.A."/>
            <person name="Ashurst J.L."/>
            <person name="Wilming L."/>
            <person name="Jones M.C."/>
            <person name="Horton R."/>
            <person name="Hunt S.E."/>
            <person name="Scott C.E."/>
            <person name="Gilbert J.G.R."/>
            <person name="Clamp M.E."/>
            <person name="Bethel G."/>
            <person name="Milne S."/>
            <person name="Ainscough R."/>
            <person name="Almeida J.P."/>
            <person name="Ambrose K.D."/>
            <person name="Andrews T.D."/>
            <person name="Ashwell R.I.S."/>
            <person name="Babbage A.K."/>
            <person name="Bagguley C.L."/>
            <person name="Bailey J."/>
            <person name="Banerjee R."/>
            <person name="Barker D.J."/>
            <person name="Barlow K.F."/>
            <person name="Bates K."/>
            <person name="Beare D.M."/>
            <person name="Beasley H."/>
            <person name="Beasley O."/>
            <person name="Bird C.P."/>
            <person name="Blakey S.E."/>
            <person name="Bray-Allen S."/>
            <person name="Brook J."/>
            <person name="Brown A.J."/>
            <person name="Brown J.Y."/>
            <person name="Burford D.C."/>
            <person name="Burrill W."/>
            <person name="Burton J."/>
            <person name="Carder C."/>
            <person name="Carter N.P."/>
            <person name="Chapman J.C."/>
            <person name="Clark S.Y."/>
            <person name="Clark G."/>
            <person name="Clee C.M."/>
            <person name="Clegg S."/>
            <person name="Cobley V."/>
            <person name="Collier R.E."/>
            <person name="Collins J.E."/>
            <person name="Colman L.K."/>
            <person name="Corby N.R."/>
            <person name="Coville G.J."/>
            <person name="Culley K.M."/>
            <person name="Dhami P."/>
            <person name="Davies J."/>
            <person name="Dunn M."/>
            <person name="Earthrowl M.E."/>
            <person name="Ellington A.E."/>
            <person name="Evans K.A."/>
            <person name="Faulkner L."/>
            <person name="Francis M.D."/>
            <person name="Frankish A."/>
            <person name="Frankland J."/>
            <person name="French L."/>
            <person name="Garner P."/>
            <person name="Garnett J."/>
            <person name="Ghori M.J."/>
            <person name="Gilby L.M."/>
            <person name="Gillson C.J."/>
            <person name="Glithero R.J."/>
            <person name="Grafham D.V."/>
            <person name="Grant M."/>
            <person name="Gribble S."/>
            <person name="Griffiths C."/>
            <person name="Griffiths M.N.D."/>
            <person name="Hall R."/>
            <person name="Halls K.S."/>
            <person name="Hammond S."/>
            <person name="Harley J.L."/>
            <person name="Hart E.A."/>
            <person name="Heath P.D."/>
            <person name="Heathcott R."/>
            <person name="Holmes S.J."/>
            <person name="Howden P.J."/>
            <person name="Howe K.L."/>
            <person name="Howell G.R."/>
            <person name="Huckle E."/>
            <person name="Humphray S.J."/>
            <person name="Humphries M.D."/>
            <person name="Hunt A.R."/>
            <person name="Johnson C.M."/>
            <person name="Joy A.A."/>
            <person name="Kay M."/>
            <person name="Keenan S.J."/>
            <person name="Kimberley A.M."/>
            <person name="King A."/>
            <person name="Laird G.K."/>
            <person name="Langford C."/>
            <person name="Lawlor S."/>
            <person name="Leongamornlert D.A."/>
            <person name="Leversha M."/>
            <person name="Lloyd C.R."/>
            <person name="Lloyd D.M."/>
            <person name="Loveland J.E."/>
            <person name="Lovell J."/>
            <person name="Martin S."/>
            <person name="Mashreghi-Mohammadi M."/>
            <person name="Maslen G.L."/>
            <person name="Matthews L."/>
            <person name="McCann O.T."/>
            <person name="McLaren S.J."/>
            <person name="McLay K."/>
            <person name="McMurray A."/>
            <person name="Moore M.J.F."/>
            <person name="Mullikin J.C."/>
            <person name="Niblett D."/>
            <person name="Nickerson T."/>
            <person name="Novik K.L."/>
            <person name="Oliver K."/>
            <person name="Overton-Larty E.K."/>
            <person name="Parker A."/>
            <person name="Patel R."/>
            <person name="Pearce A.V."/>
            <person name="Peck A.I."/>
            <person name="Phillimore B.J.C.T."/>
            <person name="Phillips S."/>
            <person name="Plumb R.W."/>
            <person name="Porter K.M."/>
            <person name="Ramsey Y."/>
            <person name="Ranby S.A."/>
            <person name="Rice C.M."/>
            <person name="Ross M.T."/>
            <person name="Searle S.M."/>
            <person name="Sehra H.K."/>
            <person name="Sheridan E."/>
            <person name="Skuce C.D."/>
            <person name="Smith S."/>
            <person name="Smith M."/>
            <person name="Spraggon L."/>
            <person name="Squares S.L."/>
            <person name="Steward C.A."/>
            <person name="Sycamore N."/>
            <person name="Tamlyn-Hall G."/>
            <person name="Tester J."/>
            <person name="Theaker A.J."/>
            <person name="Thomas D.W."/>
            <person name="Thorpe A."/>
            <person name="Tracey A."/>
            <person name="Tromans A."/>
            <person name="Tubby B."/>
            <person name="Wall M."/>
            <person name="Wallis J.M."/>
            <person name="West A.P."/>
            <person name="White S.S."/>
            <person name="Whitehead S.L."/>
            <person name="Whittaker H."/>
            <person name="Wild A."/>
            <person name="Willey D.J."/>
            <person name="Wilmer T.E."/>
            <person name="Wood J.M."/>
            <person name="Wray P.W."/>
            <person name="Wyatt J.C."/>
            <person name="Young L."/>
            <person name="Younger R.M."/>
            <person name="Bentley D.R."/>
            <person name="Coulson A."/>
            <person name="Durbin R.M."/>
            <person name="Hubbard T."/>
            <person name="Sulston J.E."/>
            <person name="Dunham I."/>
            <person name="Rogers J."/>
            <person name="Beck S."/>
        </authorList>
    </citation>
    <scope>NUCLEOTIDE SEQUENCE [LARGE SCALE GENOMIC DNA]</scope>
</reference>
<reference key="4">
    <citation type="submission" date="2005-09" db="EMBL/GenBank/DDBJ databases">
        <authorList>
            <person name="Mural R.J."/>
            <person name="Istrail S."/>
            <person name="Sutton G.G."/>
            <person name="Florea L."/>
            <person name="Halpern A.L."/>
            <person name="Mobarry C.M."/>
            <person name="Lippert R."/>
            <person name="Walenz B."/>
            <person name="Shatkay H."/>
            <person name="Dew I."/>
            <person name="Miller J.R."/>
            <person name="Flanigan M.J."/>
            <person name="Edwards N.J."/>
            <person name="Bolanos R."/>
            <person name="Fasulo D."/>
            <person name="Halldorsson B.V."/>
            <person name="Hannenhalli S."/>
            <person name="Turner R."/>
            <person name="Yooseph S."/>
            <person name="Lu F."/>
            <person name="Nusskern D.R."/>
            <person name="Shue B.C."/>
            <person name="Zheng X.H."/>
            <person name="Zhong F."/>
            <person name="Delcher A.L."/>
            <person name="Huson D.H."/>
            <person name="Kravitz S.A."/>
            <person name="Mouchard L."/>
            <person name="Reinert K."/>
            <person name="Remington K.A."/>
            <person name="Clark A.G."/>
            <person name="Waterman M.S."/>
            <person name="Eichler E.E."/>
            <person name="Adams M.D."/>
            <person name="Hunkapiller M.W."/>
            <person name="Myers E.W."/>
            <person name="Venter J.C."/>
        </authorList>
    </citation>
    <scope>NUCLEOTIDE SEQUENCE [LARGE SCALE GENOMIC DNA]</scope>
</reference>
<reference key="5">
    <citation type="journal article" date="2004" name="Genome Res.">
        <title>The status, quality, and expansion of the NIH full-length cDNA project: the Mammalian Gene Collection (MGC).</title>
        <authorList>
            <consortium name="The MGC Project Team"/>
        </authorList>
    </citation>
    <scope>NUCLEOTIDE SEQUENCE [LARGE SCALE MRNA] (ISOFORM 1)</scope>
    <scope>VARIANT GLN-230</scope>
    <source>
        <tissue>Liver</tissue>
    </source>
</reference>
<reference key="6">
    <citation type="journal article" date="2011" name="BMC Syst. Biol.">
        <title>Initial characterization of the human central proteome.</title>
        <authorList>
            <person name="Burkard T.R."/>
            <person name="Planyavsky M."/>
            <person name="Kaupe I."/>
            <person name="Breitwieser F.P."/>
            <person name="Buerckstuemmer T."/>
            <person name="Bennett K.L."/>
            <person name="Superti-Furga G."/>
            <person name="Colinge J."/>
        </authorList>
    </citation>
    <scope>IDENTIFICATION BY MASS SPECTROMETRY [LARGE SCALE ANALYSIS]</scope>
</reference>
<reference key="7">
    <citation type="journal article" date="2012" name="Mol. Cell. Proteomics">
        <title>Comparative large-scale characterisation of plant vs. mammal proteins reveals similar and idiosyncratic N-alpha acetylation features.</title>
        <authorList>
            <person name="Bienvenut W.V."/>
            <person name="Sumpton D."/>
            <person name="Martinez A."/>
            <person name="Lilla S."/>
            <person name="Espagne C."/>
            <person name="Meinnel T."/>
            <person name="Giglione C."/>
        </authorList>
    </citation>
    <scope>ACETYLATION [LARGE SCALE ANALYSIS] AT ALA-2</scope>
    <scope>CLEAVAGE OF INITIATOR METHIONINE [LARGE SCALE ANALYSIS]</scope>
    <scope>IDENTIFICATION BY MASS SPECTROMETRY [LARGE SCALE ANALYSIS]</scope>
</reference>
<reference key="8">
    <citation type="journal article" date="2012" name="Proc. Natl. Acad. Sci. U.S.A.">
        <title>N-terminal acetylome analyses and functional insights of the N-terminal acetyltransferase NatB.</title>
        <authorList>
            <person name="Van Damme P."/>
            <person name="Lasa M."/>
            <person name="Polevoda B."/>
            <person name="Gazquez C."/>
            <person name="Elosegui-Artola A."/>
            <person name="Kim D.S."/>
            <person name="De Juan-Pardo E."/>
            <person name="Demeyer K."/>
            <person name="Hole K."/>
            <person name="Larrea E."/>
            <person name="Timmerman E."/>
            <person name="Prieto J."/>
            <person name="Arnesen T."/>
            <person name="Sherman F."/>
            <person name="Gevaert K."/>
            <person name="Aldabe R."/>
        </authorList>
    </citation>
    <scope>ACETYLATION [LARGE SCALE ANALYSIS] AT ALA-2</scope>
    <scope>CLEAVAGE OF INITIATOR METHIONINE [LARGE SCALE ANALYSIS]</scope>
    <scope>IDENTIFICATION BY MASS SPECTROMETRY [LARGE SCALE ANALYSIS]</scope>
</reference>
<reference key="9">
    <citation type="journal article" date="2021" name="Int. J. Mol. Sci.">
        <title>Human TRMT112-Methyltransferase Network Consists of Seven Partners Interacting with a Common Co-Factor.</title>
        <authorList>
            <person name="Brumele B."/>
            <person name="Mutso M."/>
            <person name="Telanne L."/>
            <person name="Ounap K."/>
            <person name="Spunde K."/>
            <person name="Abroi A."/>
            <person name="Kurg R."/>
        </authorList>
    </citation>
    <scope>IDENTIFICATION IN THE TRMT11-TRM112 METHYLTRANSFERASE COMPLEX</scope>
    <scope>SUBCELLULAR LOCATION</scope>
</reference>
<reference key="10">
    <citation type="journal article" date="2023" name="Nucleic Acids Res.">
        <title>N 2-methylguanosine modifications on human tRNAs and snRNA U6 are important for cell proliferation, protein translation and pre-mRNA splicing.</title>
        <authorList>
            <person name="Wang C."/>
            <person name="Ulryck N."/>
            <person name="Herzel L."/>
            <person name="Pythoud N."/>
            <person name="Kleiber N."/>
            <person name="Guerineau V."/>
            <person name="Jactel V."/>
            <person name="Moritz C."/>
            <person name="Bohnsack M.T."/>
            <person name="Carapito C."/>
            <person name="Touboul D."/>
            <person name="Bohnsack K.E."/>
            <person name="Graille M."/>
        </authorList>
    </citation>
    <scope>FUNCTION</scope>
    <scope>CATALYTIC ACTIVITY</scope>
    <scope>IDENTIFICATION IN THE TRMT11-TRM112 METHYLTRANSFERASE COMPLEX</scope>
</reference>
<keyword id="KW-0007">Acetylation</keyword>
<keyword id="KW-0025">Alternative splicing</keyword>
<keyword id="KW-0963">Cytoplasm</keyword>
<keyword id="KW-0489">Methyltransferase</keyword>
<keyword id="KW-1267">Proteomics identification</keyword>
<keyword id="KW-1185">Reference proteome</keyword>
<keyword id="KW-0694">RNA-binding</keyword>
<keyword id="KW-0949">S-adenosyl-L-methionine</keyword>
<keyword id="KW-0808">Transferase</keyword>
<keyword id="KW-0819">tRNA processing</keyword>
<keyword id="KW-0820">tRNA-binding</keyword>
<proteinExistence type="evidence at protein level"/>
<accession>Q7Z4G4</accession>
<accession>E1P570</accession>
<accession>Q5JY11</accession>
<accession>Q6PGQ5</accession>
<accession>Q9HC13</accession>
<name>TRM11_HUMAN</name>
<comment type="function">
    <text evidence="4">Catalytic subunit of the TRMT11-TRM112 methyltransferase complex, that specifically mediates the S-adenosyl-L-methionine-dependent N(2)-methylation of guanosine nucleotide at position 10 (m2G10) in tRNAs (PubMed:37283053). This is one of the major tRNA (guanine-N(2))-methyltransferases (PubMed:37283053).</text>
</comment>
<comment type="catalytic activity">
    <reaction evidence="4">
        <text>guanosine(10) in tRNA + S-adenosyl-L-methionine = N(2)-methylguanosine(10) in tRNA + S-adenosyl-L-homocysteine + H(+)</text>
        <dbReference type="Rhea" id="RHEA:43128"/>
        <dbReference type="Rhea" id="RHEA-COMP:10355"/>
        <dbReference type="Rhea" id="RHEA-COMP:10357"/>
        <dbReference type="ChEBI" id="CHEBI:15378"/>
        <dbReference type="ChEBI" id="CHEBI:57856"/>
        <dbReference type="ChEBI" id="CHEBI:59789"/>
        <dbReference type="ChEBI" id="CHEBI:74269"/>
        <dbReference type="ChEBI" id="CHEBI:74481"/>
        <dbReference type="EC" id="2.1.1.214"/>
    </reaction>
    <physiologicalReaction direction="left-to-right" evidence="4">
        <dbReference type="Rhea" id="RHEA:43129"/>
    </physiologicalReaction>
</comment>
<comment type="subunit">
    <text evidence="3 4">Part of the heterodimeric TRMT11-TRM112 methyltransferase complex; this complex forms an active tRNA methyltransferase, where TRMT112 acts as an activator of the catalytic subunit TRMT11.</text>
</comment>
<comment type="interaction">
    <interactant intactId="EBI-2515608">
        <id>Q7Z4G4</id>
    </interactant>
    <interactant intactId="EBI-10303987">
        <id>Q9UHG0</id>
        <label>DCDC2</label>
    </interactant>
    <organismsDiffer>false</organismsDiffer>
    <experiments>3</experiments>
</comment>
<comment type="interaction">
    <interactant intactId="EBI-2515608">
        <id>Q7Z4G4</id>
    </interactant>
    <interactant intactId="EBI-2865388">
        <id>Q969G2</id>
        <label>LHX4</label>
    </interactant>
    <organismsDiffer>false</organismsDiffer>
    <experiments>3</experiments>
</comment>
<comment type="interaction">
    <interactant intactId="EBI-2515608">
        <id>Q7Z4G4</id>
    </interactant>
    <interactant intactId="EBI-373326">
        <id>Q9UI30</id>
        <label>TRMT112</label>
    </interactant>
    <organismsDiffer>false</organismsDiffer>
    <experiments>6</experiments>
</comment>
<comment type="subcellular location">
    <subcellularLocation>
        <location evidence="3">Cytoplasm</location>
    </subcellularLocation>
</comment>
<comment type="alternative products">
    <event type="alternative splicing"/>
    <isoform>
        <id>Q7Z4G4-1</id>
        <name>1</name>
        <sequence type="displayed"/>
    </isoform>
    <isoform>
        <id>Q7Z4G4-2</id>
        <name>2</name>
        <sequence type="described" ref="VSP_017818"/>
    </isoform>
    <isoform>
        <id>Q7Z4G4-3</id>
        <name>3</name>
        <sequence type="described" ref="VSP_017816 VSP_017817"/>
    </isoform>
</comment>
<comment type="similarity">
    <text evidence="1">Belongs to the class I-like SAM-binding methyltransferase superfamily. TRM11 methyltransferase family.</text>
</comment>